<comment type="function">
    <text evidence="1">Microtubule-based anterograde translocator for membranous organelles. Plus end-directed microtubule sliding activity in vitro. Plays a role in primary cilia formation. Plays a role in centriole cohesion and subdistal appendage organization and function. Regulates the formation of the subdistal appendage via recruitment of DCTN1 to the centriole. Also required for ciliary basal feet formation and microtubule anchoring to mother centriole.</text>
</comment>
<comment type="subunit">
    <text evidence="1 2">Heterodimer of KIF3A and KIF3B (By similarity). Interacts with CIMAP3. Interacts with CLN3 (By similarity). Interacts with DCTN1 (By similarity). Interacts with FLCN. Interacts with AP3B1 (By similarity).</text>
</comment>
<comment type="subcellular location">
    <subcellularLocation>
        <location evidence="6">Cytoplasm</location>
        <location evidence="6">Cytoskeleton</location>
    </subcellularLocation>
    <subcellularLocation>
        <location evidence="1">Cell projection</location>
        <location evidence="1">Cilium</location>
    </subcellularLocation>
    <subcellularLocation>
        <location evidence="1">Cytoplasm</location>
        <location evidence="1">Cytoskeleton</location>
        <location evidence="1">Microtubule organizing center</location>
        <location evidence="1">Centrosome</location>
        <location evidence="1">Centriole</location>
    </subcellularLocation>
    <text evidence="1">Localizes to the subdistal appendage region of the centriole.</text>
</comment>
<comment type="similarity">
    <text evidence="4">Belongs to the TRAFAC class myosin-kinesin ATPase superfamily. Kinesin family. Kinesin II subfamily.</text>
</comment>
<name>KIF3A_PONAB</name>
<dbReference type="EMBL" id="CR861275">
    <property type="protein sequence ID" value="CAH93343.1"/>
    <property type="molecule type" value="mRNA"/>
</dbReference>
<dbReference type="RefSeq" id="NP_001126968.1">
    <property type="nucleotide sequence ID" value="NM_001133496.1"/>
</dbReference>
<dbReference type="SMR" id="Q5R4H3"/>
<dbReference type="FunCoup" id="Q5R4H3">
    <property type="interactions" value="1457"/>
</dbReference>
<dbReference type="STRING" id="9601.ENSPPYP00000017633"/>
<dbReference type="GeneID" id="100173987"/>
<dbReference type="KEGG" id="pon:100173987"/>
<dbReference type="CTD" id="11127"/>
<dbReference type="eggNOG" id="KOG4280">
    <property type="taxonomic scope" value="Eukaryota"/>
</dbReference>
<dbReference type="InParanoid" id="Q5R4H3"/>
<dbReference type="OrthoDB" id="3176171at2759"/>
<dbReference type="Proteomes" id="UP000001595">
    <property type="component" value="Unplaced"/>
</dbReference>
<dbReference type="GO" id="GO:0005814">
    <property type="term" value="C:centriole"/>
    <property type="evidence" value="ECO:0000250"/>
    <property type="project" value="UniProtKB"/>
</dbReference>
<dbReference type="GO" id="GO:0005929">
    <property type="term" value="C:cilium"/>
    <property type="evidence" value="ECO:0000250"/>
    <property type="project" value="UniProtKB"/>
</dbReference>
<dbReference type="GO" id="GO:0005737">
    <property type="term" value="C:cytoplasm"/>
    <property type="evidence" value="ECO:0007669"/>
    <property type="project" value="UniProtKB-KW"/>
</dbReference>
<dbReference type="GO" id="GO:0005874">
    <property type="term" value="C:microtubule"/>
    <property type="evidence" value="ECO:0007669"/>
    <property type="project" value="UniProtKB-KW"/>
</dbReference>
<dbReference type="GO" id="GO:0005524">
    <property type="term" value="F:ATP binding"/>
    <property type="evidence" value="ECO:0007669"/>
    <property type="project" value="UniProtKB-KW"/>
</dbReference>
<dbReference type="GO" id="GO:0008017">
    <property type="term" value="F:microtubule binding"/>
    <property type="evidence" value="ECO:0007669"/>
    <property type="project" value="InterPro"/>
</dbReference>
<dbReference type="GO" id="GO:0003777">
    <property type="term" value="F:microtubule motor activity"/>
    <property type="evidence" value="ECO:0007669"/>
    <property type="project" value="InterPro"/>
</dbReference>
<dbReference type="GO" id="GO:0010457">
    <property type="term" value="P:centriole-centriole cohesion"/>
    <property type="evidence" value="ECO:0000250"/>
    <property type="project" value="UniProtKB"/>
</dbReference>
<dbReference type="GO" id="GO:0060271">
    <property type="term" value="P:cilium assembly"/>
    <property type="evidence" value="ECO:0000250"/>
    <property type="project" value="UniProtKB"/>
</dbReference>
<dbReference type="GO" id="GO:0034454">
    <property type="term" value="P:microtubule anchoring at centrosome"/>
    <property type="evidence" value="ECO:0000250"/>
    <property type="project" value="UniProtKB"/>
</dbReference>
<dbReference type="GO" id="GO:0007018">
    <property type="term" value="P:microtubule-based movement"/>
    <property type="evidence" value="ECO:0007669"/>
    <property type="project" value="InterPro"/>
</dbReference>
<dbReference type="CDD" id="cd01371">
    <property type="entry name" value="KISc_KIF3"/>
    <property type="match status" value="1"/>
</dbReference>
<dbReference type="FunFam" id="3.40.850.10:FF:000028">
    <property type="entry name" value="Kinesin-like protein"/>
    <property type="match status" value="1"/>
</dbReference>
<dbReference type="Gene3D" id="3.40.850.10">
    <property type="entry name" value="Kinesin motor domain"/>
    <property type="match status" value="1"/>
</dbReference>
<dbReference type="InterPro" id="IPR027640">
    <property type="entry name" value="Kinesin-like_fam"/>
</dbReference>
<dbReference type="InterPro" id="IPR019821">
    <property type="entry name" value="Kinesin_motor_CS"/>
</dbReference>
<dbReference type="InterPro" id="IPR001752">
    <property type="entry name" value="Kinesin_motor_dom"/>
</dbReference>
<dbReference type="InterPro" id="IPR036961">
    <property type="entry name" value="Kinesin_motor_dom_sf"/>
</dbReference>
<dbReference type="InterPro" id="IPR027417">
    <property type="entry name" value="P-loop_NTPase"/>
</dbReference>
<dbReference type="PANTHER" id="PTHR47969">
    <property type="entry name" value="CHROMOSOME-ASSOCIATED KINESIN KIF4A-RELATED"/>
    <property type="match status" value="1"/>
</dbReference>
<dbReference type="PANTHER" id="PTHR47969:SF21">
    <property type="entry name" value="KINESIN-LIKE PROTEIN"/>
    <property type="match status" value="1"/>
</dbReference>
<dbReference type="Pfam" id="PF00225">
    <property type="entry name" value="Kinesin"/>
    <property type="match status" value="1"/>
</dbReference>
<dbReference type="PRINTS" id="PR00380">
    <property type="entry name" value="KINESINHEAVY"/>
</dbReference>
<dbReference type="SMART" id="SM00129">
    <property type="entry name" value="KISc"/>
    <property type="match status" value="1"/>
</dbReference>
<dbReference type="SUPFAM" id="SSF52540">
    <property type="entry name" value="P-loop containing nucleoside triphosphate hydrolases"/>
    <property type="match status" value="1"/>
</dbReference>
<dbReference type="PROSITE" id="PS00411">
    <property type="entry name" value="KINESIN_MOTOR_1"/>
    <property type="match status" value="1"/>
</dbReference>
<dbReference type="PROSITE" id="PS50067">
    <property type="entry name" value="KINESIN_MOTOR_2"/>
    <property type="match status" value="1"/>
</dbReference>
<sequence length="702" mass="80270">MPINKSEKPESCDNVKVVVRCRPLNEREKSMCYKQAVSVDEMRGTITVHKTDSSNEPPKTFTFDTVFGPESKQLDVYNLTARPIIDSVLEGYNGTIFAYGQTGTGKTFTMEGVRAIPELRGIIPNSFAHIFGHIAKAEGDTRFLVRVSYLEIYNEEVRDLLGKDQTQRLEVKERPDVGVYIKDLSAYVVNNADDMDRIMTLGHKNRSVGATNMNEHSSRSHAIFTITIECSEKGIDGNMHVRMGKLHLVDLAGSERQAKTGATGQRLKEATKINLSLSTLGNVISALVDGKSTHVPYRNSKLTRLLQDSLGGNSKTMMCANIGPADYNYDETISTLRYANRAKNIKNKARINEDPKDALLRQFQKEIEELKKKLEEGEEISGSDISGSEEDDDEEGEIGEDGEKRKKRRDQAGKKKVSPDKMIEMQAKIDEERKALETKLDMEEEERNKARAELEKREKDLLKAQQEHQSLLEKLSALEKKVIVGGVDLLAKAEEQEKLLEESNMELEERRKRAEQLRRELEEKEQERLDIEEKYTSLQEEAQGKTKKLKKVWTMLMAAKSEMADLQQEHQGEIEGLLENIRQLSRELRLQMLIIDNFIPRDYQEMIENYVHWNEDIGEWQLKCVAYTGNNMRKQTPVPDKKEKDPFEVDLSHVYLAYTEESLRQSLMKLERPRTSKGKARPKTGRRKRSAKPETVIDSLLQ</sequence>
<reference key="1">
    <citation type="submission" date="2004-11" db="EMBL/GenBank/DDBJ databases">
        <authorList>
            <consortium name="The German cDNA consortium"/>
        </authorList>
    </citation>
    <scope>NUCLEOTIDE SEQUENCE [LARGE SCALE MRNA]</scope>
    <source>
        <tissue>Brain cortex</tissue>
    </source>
</reference>
<keyword id="KW-0067">ATP-binding</keyword>
<keyword id="KW-0966">Cell projection</keyword>
<keyword id="KW-0969">Cilium</keyword>
<keyword id="KW-0970">Cilium biogenesis/degradation</keyword>
<keyword id="KW-0175">Coiled coil</keyword>
<keyword id="KW-0963">Cytoplasm</keyword>
<keyword id="KW-0206">Cytoskeleton</keyword>
<keyword id="KW-0493">Microtubule</keyword>
<keyword id="KW-0505">Motor protein</keyword>
<keyword id="KW-0547">Nucleotide-binding</keyword>
<keyword id="KW-0597">Phosphoprotein</keyword>
<keyword id="KW-1185">Reference proteome</keyword>
<proteinExistence type="evidence at transcript level"/>
<feature type="chain" id="PRO_0000230791" description="Kinesin-like protein KIF3A">
    <location>
        <begin position="1"/>
        <end position="702"/>
    </location>
</feature>
<feature type="domain" description="Kinesin motor" evidence="4">
    <location>
        <begin position="14"/>
        <end position="345"/>
    </location>
</feature>
<feature type="region of interest" description="Disordered" evidence="5">
    <location>
        <begin position="372"/>
        <end position="424"/>
    </location>
</feature>
<feature type="region of interest" description="Globular">
    <location>
        <begin position="600"/>
        <end position="702"/>
    </location>
</feature>
<feature type="region of interest" description="Disordered" evidence="5">
    <location>
        <begin position="667"/>
        <end position="702"/>
    </location>
</feature>
<feature type="coiled-coil region" evidence="3">
    <location>
        <begin position="355"/>
        <end position="593"/>
    </location>
</feature>
<feature type="compositionally biased region" description="Acidic residues" evidence="5">
    <location>
        <begin position="376"/>
        <end position="400"/>
    </location>
</feature>
<feature type="compositionally biased region" description="Basic and acidic residues" evidence="5">
    <location>
        <begin position="410"/>
        <end position="424"/>
    </location>
</feature>
<feature type="compositionally biased region" description="Basic residues" evidence="5">
    <location>
        <begin position="675"/>
        <end position="690"/>
    </location>
</feature>
<feature type="binding site" evidence="4">
    <location>
        <begin position="100"/>
        <end position="107"/>
    </location>
    <ligand>
        <name>ATP</name>
        <dbReference type="ChEBI" id="CHEBI:30616"/>
    </ligand>
</feature>
<feature type="modified residue" description="Phosphoserine" evidence="2">
    <location>
        <position position="690"/>
    </location>
</feature>
<organism>
    <name type="scientific">Pongo abelii</name>
    <name type="common">Sumatran orangutan</name>
    <name type="synonym">Pongo pygmaeus abelii</name>
    <dbReference type="NCBI Taxonomy" id="9601"/>
    <lineage>
        <taxon>Eukaryota</taxon>
        <taxon>Metazoa</taxon>
        <taxon>Chordata</taxon>
        <taxon>Craniata</taxon>
        <taxon>Vertebrata</taxon>
        <taxon>Euteleostomi</taxon>
        <taxon>Mammalia</taxon>
        <taxon>Eutheria</taxon>
        <taxon>Euarchontoglires</taxon>
        <taxon>Primates</taxon>
        <taxon>Haplorrhini</taxon>
        <taxon>Catarrhini</taxon>
        <taxon>Hominidae</taxon>
        <taxon>Pongo</taxon>
    </lineage>
</organism>
<protein>
    <recommendedName>
        <fullName>Kinesin-like protein KIF3A</fullName>
    </recommendedName>
    <alternativeName>
        <fullName>Microtubule plus end-directed kinesin motor 3A</fullName>
    </alternativeName>
</protein>
<accession>Q5R4H3</accession>
<gene>
    <name type="primary">KIF3A</name>
</gene>
<evidence type="ECO:0000250" key="1">
    <source>
        <dbReference type="UniProtKB" id="P28741"/>
    </source>
</evidence>
<evidence type="ECO:0000250" key="2">
    <source>
        <dbReference type="UniProtKB" id="Q9Y496"/>
    </source>
</evidence>
<evidence type="ECO:0000255" key="3"/>
<evidence type="ECO:0000255" key="4">
    <source>
        <dbReference type="PROSITE-ProRule" id="PRU00283"/>
    </source>
</evidence>
<evidence type="ECO:0000256" key="5">
    <source>
        <dbReference type="SAM" id="MobiDB-lite"/>
    </source>
</evidence>
<evidence type="ECO:0000305" key="6"/>